<reference key="1">
    <citation type="submission" date="2005-08" db="EMBL/GenBank/DDBJ databases">
        <title>Complete sequence of Synechococcus sp. CC9902.</title>
        <authorList>
            <person name="Copeland A."/>
            <person name="Lucas S."/>
            <person name="Lapidus A."/>
            <person name="Barry K."/>
            <person name="Detter J.C."/>
            <person name="Glavina T."/>
            <person name="Hammon N."/>
            <person name="Israni S."/>
            <person name="Pitluck S."/>
            <person name="Martinez M."/>
            <person name="Schmutz J."/>
            <person name="Larimer F."/>
            <person name="Land M."/>
            <person name="Kyrpides N."/>
            <person name="Ivanova N."/>
            <person name="Richardson P."/>
        </authorList>
    </citation>
    <scope>NUCLEOTIDE SEQUENCE [LARGE SCALE GENOMIC DNA]</scope>
    <source>
        <strain>CC9902</strain>
    </source>
</reference>
<keyword id="KW-0004">4Fe-4S</keyword>
<keyword id="KW-0408">Iron</keyword>
<keyword id="KW-0411">Iron-sulfur</keyword>
<keyword id="KW-0472">Membrane</keyword>
<keyword id="KW-0479">Metal-binding</keyword>
<keyword id="KW-0520">NAD</keyword>
<keyword id="KW-0521">NADP</keyword>
<keyword id="KW-0618">Plastoquinone</keyword>
<keyword id="KW-0874">Quinone</keyword>
<keyword id="KW-1185">Reference proteome</keyword>
<keyword id="KW-0677">Repeat</keyword>
<keyword id="KW-0793">Thylakoid</keyword>
<keyword id="KW-1278">Translocase</keyword>
<sequence length="210" mass="23691">MFGFLKQVGDYTRDAVDAARNLAQGFAVTFDHMQRRPVTVQYPYEKLIPSERYRGRIHYEFDKCIACEVCVRVCPINLPVVDWVMNKATKKKELRNYSIDFGVCIFCGNCVEYCPTNCLSMTEEYELAAFDRHSLNYDNVALGRLPTSVTTDPSVQPLRELVYLPAGEMDPHTVSADRPRAGKLPAEVLETLAPVKDEGQSSKAVLKEDA</sequence>
<name>NDHI_SYNS9</name>
<proteinExistence type="inferred from homology"/>
<accession>Q3B074</accession>
<feature type="chain" id="PRO_0000245694" description="NAD(P)H-quinone oxidoreductase subunit I">
    <location>
        <begin position="1"/>
        <end position="210"/>
    </location>
</feature>
<feature type="domain" description="4Fe-4S ferredoxin-type 1" evidence="1">
    <location>
        <begin position="55"/>
        <end position="84"/>
    </location>
</feature>
<feature type="domain" description="4Fe-4S ferredoxin-type 2" evidence="1">
    <location>
        <begin position="95"/>
        <end position="124"/>
    </location>
</feature>
<feature type="binding site" evidence="1">
    <location>
        <position position="64"/>
    </location>
    <ligand>
        <name>[4Fe-4S] cluster</name>
        <dbReference type="ChEBI" id="CHEBI:49883"/>
        <label>1</label>
    </ligand>
</feature>
<feature type="binding site" evidence="1">
    <location>
        <position position="67"/>
    </location>
    <ligand>
        <name>[4Fe-4S] cluster</name>
        <dbReference type="ChEBI" id="CHEBI:49883"/>
        <label>1</label>
    </ligand>
</feature>
<feature type="binding site" evidence="1">
    <location>
        <position position="70"/>
    </location>
    <ligand>
        <name>[4Fe-4S] cluster</name>
        <dbReference type="ChEBI" id="CHEBI:49883"/>
        <label>1</label>
    </ligand>
</feature>
<feature type="binding site" evidence="1">
    <location>
        <position position="74"/>
    </location>
    <ligand>
        <name>[4Fe-4S] cluster</name>
        <dbReference type="ChEBI" id="CHEBI:49883"/>
        <label>2</label>
    </ligand>
</feature>
<feature type="binding site" evidence="1">
    <location>
        <position position="104"/>
    </location>
    <ligand>
        <name>[4Fe-4S] cluster</name>
        <dbReference type="ChEBI" id="CHEBI:49883"/>
        <label>2</label>
    </ligand>
</feature>
<feature type="binding site" evidence="1">
    <location>
        <position position="107"/>
    </location>
    <ligand>
        <name>[4Fe-4S] cluster</name>
        <dbReference type="ChEBI" id="CHEBI:49883"/>
        <label>2</label>
    </ligand>
</feature>
<feature type="binding site" evidence="1">
    <location>
        <position position="110"/>
    </location>
    <ligand>
        <name>[4Fe-4S] cluster</name>
        <dbReference type="ChEBI" id="CHEBI:49883"/>
        <label>2</label>
    </ligand>
</feature>
<feature type="binding site" evidence="1">
    <location>
        <position position="114"/>
    </location>
    <ligand>
        <name>[4Fe-4S] cluster</name>
        <dbReference type="ChEBI" id="CHEBI:49883"/>
        <label>1</label>
    </ligand>
</feature>
<organism>
    <name type="scientific">Synechococcus sp. (strain CC9902)</name>
    <dbReference type="NCBI Taxonomy" id="316279"/>
    <lineage>
        <taxon>Bacteria</taxon>
        <taxon>Bacillati</taxon>
        <taxon>Cyanobacteriota</taxon>
        <taxon>Cyanophyceae</taxon>
        <taxon>Synechococcales</taxon>
        <taxon>Synechococcaceae</taxon>
        <taxon>Synechococcus</taxon>
    </lineage>
</organism>
<comment type="function">
    <text evidence="1">NDH-1 shuttles electrons from an unknown electron donor, via FMN and iron-sulfur (Fe-S) centers, to quinones in the respiratory and/or the photosynthetic chain. The immediate electron acceptor for the enzyme in this species is believed to be plastoquinone. Couples the redox reaction to proton translocation, and thus conserves the redox energy in a proton gradient.</text>
</comment>
<comment type="catalytic activity">
    <reaction evidence="1">
        <text>a plastoquinone + NADH + (n+1) H(+)(in) = a plastoquinol + NAD(+) + n H(+)(out)</text>
        <dbReference type="Rhea" id="RHEA:42608"/>
        <dbReference type="Rhea" id="RHEA-COMP:9561"/>
        <dbReference type="Rhea" id="RHEA-COMP:9562"/>
        <dbReference type="ChEBI" id="CHEBI:15378"/>
        <dbReference type="ChEBI" id="CHEBI:17757"/>
        <dbReference type="ChEBI" id="CHEBI:57540"/>
        <dbReference type="ChEBI" id="CHEBI:57945"/>
        <dbReference type="ChEBI" id="CHEBI:62192"/>
    </reaction>
</comment>
<comment type="catalytic activity">
    <reaction evidence="1">
        <text>a plastoquinone + NADPH + (n+1) H(+)(in) = a plastoquinol + NADP(+) + n H(+)(out)</text>
        <dbReference type="Rhea" id="RHEA:42612"/>
        <dbReference type="Rhea" id="RHEA-COMP:9561"/>
        <dbReference type="Rhea" id="RHEA-COMP:9562"/>
        <dbReference type="ChEBI" id="CHEBI:15378"/>
        <dbReference type="ChEBI" id="CHEBI:17757"/>
        <dbReference type="ChEBI" id="CHEBI:57783"/>
        <dbReference type="ChEBI" id="CHEBI:58349"/>
        <dbReference type="ChEBI" id="CHEBI:62192"/>
    </reaction>
</comment>
<comment type="cofactor">
    <cofactor evidence="1">
        <name>[4Fe-4S] cluster</name>
        <dbReference type="ChEBI" id="CHEBI:49883"/>
    </cofactor>
    <text evidence="1">Binds 2 [4Fe-4S] clusters per subunit.</text>
</comment>
<comment type="subunit">
    <text evidence="1">NDH-1 is composed of at least 11 different subunits.</text>
</comment>
<comment type="subcellular location">
    <subcellularLocation>
        <location evidence="1">Cellular thylakoid membrane</location>
        <topology evidence="1">Peripheral membrane protein</topology>
    </subcellularLocation>
</comment>
<comment type="similarity">
    <text evidence="1">Belongs to the complex I 23 kDa subunit family.</text>
</comment>
<protein>
    <recommendedName>
        <fullName evidence="1">NAD(P)H-quinone oxidoreductase subunit I</fullName>
        <ecNumber evidence="1">7.1.1.-</ecNumber>
    </recommendedName>
    <alternativeName>
        <fullName evidence="1">NAD(P)H dehydrogenase I subunit I</fullName>
    </alternativeName>
    <alternativeName>
        <fullName evidence="1">NDH-1 subunit I</fullName>
        <shortName evidence="1">NDH-I</shortName>
    </alternativeName>
</protein>
<gene>
    <name evidence="1" type="primary">ndhI</name>
    <name type="ordered locus">Syncc9902_0281</name>
</gene>
<dbReference type="EC" id="7.1.1.-" evidence="1"/>
<dbReference type="EMBL" id="CP000097">
    <property type="protein sequence ID" value="ABB25254.1"/>
    <property type="molecule type" value="Genomic_DNA"/>
</dbReference>
<dbReference type="RefSeq" id="WP_011359114.1">
    <property type="nucleotide sequence ID" value="NC_007513.1"/>
</dbReference>
<dbReference type="SMR" id="Q3B074"/>
<dbReference type="STRING" id="316279.Syncc9902_0281"/>
<dbReference type="KEGG" id="sye:Syncc9902_0281"/>
<dbReference type="eggNOG" id="COG1143">
    <property type="taxonomic scope" value="Bacteria"/>
</dbReference>
<dbReference type="HOGENOM" id="CLU_122804_0_0_3"/>
<dbReference type="OrthoDB" id="9798098at2"/>
<dbReference type="Proteomes" id="UP000002712">
    <property type="component" value="Chromosome"/>
</dbReference>
<dbReference type="GO" id="GO:0031676">
    <property type="term" value="C:plasma membrane-derived thylakoid membrane"/>
    <property type="evidence" value="ECO:0007669"/>
    <property type="project" value="UniProtKB-SubCell"/>
</dbReference>
<dbReference type="GO" id="GO:0051539">
    <property type="term" value="F:4 iron, 4 sulfur cluster binding"/>
    <property type="evidence" value="ECO:0007669"/>
    <property type="project" value="UniProtKB-KW"/>
</dbReference>
<dbReference type="GO" id="GO:0005506">
    <property type="term" value="F:iron ion binding"/>
    <property type="evidence" value="ECO:0007669"/>
    <property type="project" value="UniProtKB-UniRule"/>
</dbReference>
<dbReference type="GO" id="GO:0008137">
    <property type="term" value="F:NADH dehydrogenase (ubiquinone) activity"/>
    <property type="evidence" value="ECO:0007669"/>
    <property type="project" value="InterPro"/>
</dbReference>
<dbReference type="GO" id="GO:0048038">
    <property type="term" value="F:quinone binding"/>
    <property type="evidence" value="ECO:0007669"/>
    <property type="project" value="UniProtKB-KW"/>
</dbReference>
<dbReference type="GO" id="GO:0019684">
    <property type="term" value="P:photosynthesis, light reaction"/>
    <property type="evidence" value="ECO:0007669"/>
    <property type="project" value="UniProtKB-UniRule"/>
</dbReference>
<dbReference type="Gene3D" id="3.30.70.3270">
    <property type="match status" value="1"/>
</dbReference>
<dbReference type="HAMAP" id="MF_01351">
    <property type="entry name" value="NDH1_NuoI"/>
    <property type="match status" value="1"/>
</dbReference>
<dbReference type="InterPro" id="IPR017896">
    <property type="entry name" value="4Fe4S_Fe-S-bd"/>
</dbReference>
<dbReference type="InterPro" id="IPR017900">
    <property type="entry name" value="4Fe4S_Fe_S_CS"/>
</dbReference>
<dbReference type="InterPro" id="IPR010226">
    <property type="entry name" value="NADH_quinone_OxRdtase_chainI"/>
</dbReference>
<dbReference type="InterPro" id="IPR004497">
    <property type="entry name" value="NDHI"/>
</dbReference>
<dbReference type="NCBIfam" id="TIGR00403">
    <property type="entry name" value="ndhI"/>
    <property type="match status" value="1"/>
</dbReference>
<dbReference type="NCBIfam" id="TIGR01971">
    <property type="entry name" value="NuoI"/>
    <property type="match status" value="1"/>
</dbReference>
<dbReference type="NCBIfam" id="NF004537">
    <property type="entry name" value="PRK05888.1-3"/>
    <property type="match status" value="1"/>
</dbReference>
<dbReference type="PANTHER" id="PTHR47275">
    <property type="entry name" value="NAD(P)H-QUINONE OXIDOREDUCTASE SUBUNIT I, CHLOROPLASTIC"/>
    <property type="match status" value="1"/>
</dbReference>
<dbReference type="PANTHER" id="PTHR47275:SF1">
    <property type="entry name" value="NAD(P)H-QUINONE OXIDOREDUCTASE SUBUNIT I, CHLOROPLASTIC"/>
    <property type="match status" value="1"/>
</dbReference>
<dbReference type="Pfam" id="PF12838">
    <property type="entry name" value="Fer4_7"/>
    <property type="match status" value="1"/>
</dbReference>
<dbReference type="SUPFAM" id="SSF54862">
    <property type="entry name" value="4Fe-4S ferredoxins"/>
    <property type="match status" value="1"/>
</dbReference>
<dbReference type="PROSITE" id="PS00198">
    <property type="entry name" value="4FE4S_FER_1"/>
    <property type="match status" value="2"/>
</dbReference>
<dbReference type="PROSITE" id="PS51379">
    <property type="entry name" value="4FE4S_FER_2"/>
    <property type="match status" value="2"/>
</dbReference>
<evidence type="ECO:0000255" key="1">
    <source>
        <dbReference type="HAMAP-Rule" id="MF_01351"/>
    </source>
</evidence>